<protein>
    <recommendedName>
        <fullName>Envelope glycoprotein I</fullName>
        <shortName>gI</shortName>
    </recommendedName>
    <alternativeName>
        <fullName>Glycoprotein IV</fullName>
        <shortName>GPIV</shortName>
    </alternativeName>
</protein>
<gene>
    <name type="primary">gI</name>
    <name type="ORF">ORF67</name>
</gene>
<accession>Q77NN4</accession>
<comment type="function">
    <text evidence="1">In epithelial cells, the heterodimer gE/gI is required for the cell-to-cell spread of the virus, by sorting nascent virions to cell junctions. Once the virus reaches the cell junctions, virus particles can spread to adjacent cells extremely rapidly through interactions with cellular receptors that accumulate at these junctions. Implicated in basolateral spread in polarized cells. In neuronal cells, gE/gI is essential for the anterograde spread of the infection throughout the host nervous system. Together with US9, the heterodimer gE/gI is involved in the sorting and transport of viral structural components toward axon tips (By similarity).</text>
</comment>
<comment type="function">
    <text evidence="1">The heterodimer gE/gI serves as a receptor for the Fc part of human IgG. Dissociation of gE/gI from IgG occurs at acidic pH. May thus be involved in anti-VZV antibodies bipolar bridging, followed by intracellular endocytosis and degradation, thereby interfering with host Ig-mediated immune responses (By similarity).</text>
</comment>
<comment type="subunit">
    <text evidence="1">Interacts with gE; this interaction enhances the Fc receptor function of gE.</text>
</comment>
<comment type="interaction">
    <interactant intactId="EBI-2533019">
        <id>Q77NN4</id>
    </interactant>
    <interactant intactId="EBI-2532305">
        <id>Q9J3M8</id>
        <label>gE</label>
    </interactant>
    <organismsDiffer>false</organismsDiffer>
    <experiments>3</experiments>
</comment>
<comment type="subcellular location">
    <subcellularLocation>
        <location evidence="1">Virion membrane</location>
        <topology evidence="1">Single-pass membrane protein</topology>
    </subcellularLocation>
    <subcellularLocation>
        <location evidence="3">Host cell membrane</location>
        <topology evidence="3">Single-pass type I membrane protein</topology>
    </subcellularLocation>
    <subcellularLocation>
        <location evidence="1">Host cell junction</location>
    </subcellularLocation>
    <subcellularLocation>
        <location evidence="1">Host Golgi apparatus membrane</location>
        <topology evidence="1">Single-pass type I membrane protein</topology>
    </subcellularLocation>
    <text evidence="1">During virion morphogenesis, this protein probably accumulates in the endosomes and trans-Golgi where secondary envelopment occurs. It is probably transported to the cell surface from where it is endocytosed and directed to the trans-Golgi network (TGN). The heterodimer gE/gI then redistribute to cell junctions to promote cell-cell spread later in the infection (By similarity).</text>
</comment>
<comment type="similarity">
    <text evidence="3">Belongs to the alphaherpesvirinae glycoprotein I family.</text>
</comment>
<proteinExistence type="evidence at protein level"/>
<sequence>MFLIQCLISAVIFYIQVTNALIFKGDHVSLQVNSSLTSILIPMQNDNYTEIKGQLVFIGEQLPTGTNYSGTLELLYADTVAFCFRSVQVIRYDGCPRIRTSAFISCRYKHSWHYGNSTDRISTEPDAGVMLKITKPGINDAGVYVLLVRLDHSRSTDGFILGVNVYTAGSHHNIHGVIYTSPSLQNGYSTRALFQQARLCDLPATPKGSGTSLFQHMLDLRAGKSLEDNPWLHEDVVTTETKSVVKEGIENHVYPTDMSTLPEKSLNDPPENLLIIIPIVASVMILTAMVIVIVISVKRRRIKKHPIYRPNTKTRRGIQNATPESDVMLEAAIAQLATIREESPPHSVVNPFVK</sequence>
<reference key="1">
    <citation type="journal article" date="2000" name="J. Infect. Dis.">
        <title>Nucleotide sequences that distinguish Oka vaccine from parental Oka and other varicella-zoster virus isolates.</title>
        <authorList>
            <person name="Argaw T."/>
            <person name="Cohen J.I."/>
            <person name="Klutch M."/>
            <person name="Lekstrom K."/>
            <person name="Yoshikawa T."/>
            <person name="Asano Y."/>
            <person name="Krause P.R."/>
        </authorList>
    </citation>
    <scope>NUCLEOTIDE SEQUENCE [GENOMIC DNA]</scope>
    <source>
        <strain>Oka varicella vaccine Biken (V-Oka-Biken)</strain>
    </source>
</reference>
<reference key="2">
    <citation type="journal article" date="2001" name="Virology">
        <title>Identification and mapping of single nucleotide polymorphisms in the varicella-zoster virus genome.</title>
        <authorList>
            <person name="Faga B."/>
            <person name="Maury W."/>
            <person name="Bruckner D.A."/>
            <person name="Grose C."/>
        </authorList>
    </citation>
    <scope>NUCLEOTIDE SEQUENCE [GENOMIC DNA]</scope>
    <source>
        <strain>Oka varicella vaccine Biken (V-Oka-Biken)</strain>
    </source>
</reference>
<reference key="3">
    <citation type="journal article" date="2002" name="J. Virol.">
        <title>Comparison of the complete DNA sequences of the Oka varicella vaccine and its parental virus.</title>
        <authorList>
            <person name="Gomi Y."/>
            <person name="Sunamachi H."/>
            <person name="Mori Y."/>
            <person name="Nagaike K."/>
            <person name="Takahashi M."/>
            <person name="Yamanishi K."/>
        </authorList>
    </citation>
    <scope>NUCLEOTIDE SEQUENCE [LARGE SCALE GENOMIC DNA]</scope>
    <source>
        <strain>Isolate Human/Japan/P-Oka/1970</strain>
        <strain>Oka varicella vaccine Biken (V-Oka-Biken)</strain>
    </source>
</reference>
<reference key="4">
    <citation type="journal article" date="2008" name="J. Virol.">
        <title>Complete DNA sequences of two oka strain varicella-zoster virus genomes.</title>
        <authorList>
            <person name="Tillieux S.L."/>
            <person name="Halsey W.S."/>
            <person name="Thomas E.S."/>
            <person name="Voycik J.J."/>
            <person name="Sathe G.M."/>
            <person name="Vassilev V."/>
        </authorList>
    </citation>
    <scope>NUCLEOTIDE SEQUENCE [LARGE SCALE GENOMIC DNA]</scope>
    <source>
        <strain>Oka varicella vaccine VarilRix (V-Oka-GSK)</strain>
        <strain>Oka varicella vaccine Varivax (V-Oka-Merck)</strain>
    </source>
</reference>
<organismHost>
    <name type="scientific">Homo sapiens</name>
    <name type="common">Human</name>
    <dbReference type="NCBI Taxonomy" id="9606"/>
</organismHost>
<name>GI_VZVO</name>
<feature type="signal peptide" evidence="2">
    <location>
        <begin position="1"/>
        <end position="20"/>
    </location>
</feature>
<feature type="chain" id="PRO_0000385500" description="Envelope glycoprotein I">
    <location>
        <begin position="21"/>
        <end position="354"/>
    </location>
</feature>
<feature type="topological domain" description="Virion surface" evidence="2">
    <location>
        <begin position="21"/>
        <end position="274"/>
    </location>
</feature>
<feature type="transmembrane region" description="Helical" evidence="2">
    <location>
        <begin position="275"/>
        <end position="295"/>
    </location>
</feature>
<feature type="topological domain" description="Intravirion" evidence="2">
    <location>
        <begin position="296"/>
        <end position="354"/>
    </location>
</feature>
<feature type="modified residue" description="Phosphoserine" evidence="1">
    <location>
        <position position="343"/>
    </location>
</feature>
<feature type="glycosylation site" description="N-linked (GlcNAc...) asparagine; by host" evidence="2">
    <location>
        <position position="33"/>
    </location>
</feature>
<feature type="glycosylation site" description="N-linked (GlcNAc...) asparagine; by host" evidence="2">
    <location>
        <position position="47"/>
    </location>
</feature>
<feature type="glycosylation site" description="N-linked (GlcNAc...) asparagine; by host" evidence="2">
    <location>
        <position position="67"/>
    </location>
</feature>
<feature type="glycosylation site" description="N-linked (GlcNAc...) asparagine; by host" evidence="2">
    <location>
        <position position="116"/>
    </location>
</feature>
<evidence type="ECO:0000250" key="1"/>
<evidence type="ECO:0000255" key="2"/>
<evidence type="ECO:0000305" key="3"/>
<organism>
    <name type="scientific">Varicella-zoster virus (strain Oka vaccine)</name>
    <name type="common">HHV-3</name>
    <name type="synonym">Human herpesvirus 3</name>
    <dbReference type="NCBI Taxonomy" id="341980"/>
    <lineage>
        <taxon>Viruses</taxon>
        <taxon>Duplodnaviria</taxon>
        <taxon>Heunggongvirae</taxon>
        <taxon>Peploviricota</taxon>
        <taxon>Herviviricetes</taxon>
        <taxon>Herpesvirales</taxon>
        <taxon>Orthoherpesviridae</taxon>
        <taxon>Alphaherpesvirinae</taxon>
        <taxon>Varicellovirus</taxon>
        <taxon>Varicellovirus humanalpha3</taxon>
        <taxon>Human herpesvirus 3</taxon>
    </lineage>
</organism>
<keyword id="KW-0325">Glycoprotein</keyword>
<keyword id="KW-1031">Host cell junction</keyword>
<keyword id="KW-1032">Host cell membrane</keyword>
<keyword id="KW-1040">Host Golgi apparatus</keyword>
<keyword id="KW-1043">Host membrane</keyword>
<keyword id="KW-0945">Host-virus interaction</keyword>
<keyword id="KW-0472">Membrane</keyword>
<keyword id="KW-0597">Phosphoprotein</keyword>
<keyword id="KW-0732">Signal</keyword>
<keyword id="KW-0812">Transmembrane</keyword>
<keyword id="KW-1133">Transmembrane helix</keyword>
<keyword id="KW-0261">Viral envelope protein</keyword>
<keyword id="KW-0899">Viral immunoevasion</keyword>
<keyword id="KW-0946">Virion</keyword>
<dbReference type="EMBL" id="AF206304">
    <property type="protein sequence ID" value="AAF61668.1"/>
    <property type="molecule type" value="Genomic_DNA"/>
</dbReference>
<dbReference type="EMBL" id="AH010548">
    <property type="protein sequence ID" value="AAK19945.1"/>
    <property type="molecule type" value="Genomic_DNA"/>
</dbReference>
<dbReference type="EMBL" id="AB097932">
    <property type="status" value="NOT_ANNOTATED_CDS"/>
    <property type="molecule type" value="Genomic_DNA"/>
</dbReference>
<dbReference type="EMBL" id="AB097933">
    <property type="status" value="NOT_ANNOTATED_CDS"/>
    <property type="molecule type" value="Genomic_DNA"/>
</dbReference>
<dbReference type="EMBL" id="DQ008354">
    <property type="protein sequence ID" value="AAY57676.1"/>
    <property type="molecule type" value="Genomic_DNA"/>
</dbReference>
<dbReference type="EMBL" id="DQ008355">
    <property type="protein sequence ID" value="AAY57747.1"/>
    <property type="molecule type" value="Genomic_DNA"/>
</dbReference>
<dbReference type="RefSeq" id="NP_040189.1">
    <property type="nucleotide sequence ID" value="NC_001348.1"/>
</dbReference>
<dbReference type="BioGRID" id="971512">
    <property type="interactions" value="3"/>
</dbReference>
<dbReference type="DIP" id="DIP-45062N"/>
<dbReference type="IntAct" id="Q77NN4">
    <property type="interactions" value="9"/>
</dbReference>
<dbReference type="MINT" id="Q77NN4"/>
<dbReference type="GlyCosmos" id="Q77NN4">
    <property type="glycosylation" value="4 sites, No reported glycans"/>
</dbReference>
<dbReference type="GeneID" id="1487689"/>
<dbReference type="KEGG" id="vg:1487689"/>
<dbReference type="Proteomes" id="UP000002603">
    <property type="component" value="Genome"/>
</dbReference>
<dbReference type="Proteomes" id="UP000008504">
    <property type="component" value="Genome"/>
</dbReference>
<dbReference type="Proteomes" id="UP000008505">
    <property type="component" value="Genome"/>
</dbReference>
<dbReference type="Proteomes" id="UP000008506">
    <property type="component" value="Genome"/>
</dbReference>
<dbReference type="GO" id="GO:0043657">
    <property type="term" value="C:host cell"/>
    <property type="evidence" value="ECO:0007669"/>
    <property type="project" value="InterPro"/>
</dbReference>
<dbReference type="GO" id="GO:0044178">
    <property type="term" value="C:host cell Golgi membrane"/>
    <property type="evidence" value="ECO:0007669"/>
    <property type="project" value="UniProtKB-SubCell"/>
</dbReference>
<dbReference type="GO" id="GO:0044156">
    <property type="term" value="C:host cell junction"/>
    <property type="evidence" value="ECO:0007669"/>
    <property type="project" value="UniProtKB-SubCell"/>
</dbReference>
<dbReference type="GO" id="GO:0016020">
    <property type="term" value="C:membrane"/>
    <property type="evidence" value="ECO:0007669"/>
    <property type="project" value="UniProtKB-KW"/>
</dbReference>
<dbReference type="GO" id="GO:0019031">
    <property type="term" value="C:viral envelope"/>
    <property type="evidence" value="ECO:0007669"/>
    <property type="project" value="UniProtKB-KW"/>
</dbReference>
<dbReference type="GO" id="GO:0055036">
    <property type="term" value="C:virion membrane"/>
    <property type="evidence" value="ECO:0007669"/>
    <property type="project" value="UniProtKB-SubCell"/>
</dbReference>
<dbReference type="InterPro" id="IPR002874">
    <property type="entry name" value="Herpes_gI"/>
</dbReference>
<dbReference type="Pfam" id="PF01688">
    <property type="entry name" value="Herpes_gI"/>
    <property type="match status" value="1"/>
</dbReference>